<proteinExistence type="evidence at protein level"/>
<gene>
    <name type="primary">Xpr1</name>
</gene>
<organism>
    <name type="scientific">Mus terricolor</name>
    <name type="common">Earth-colored mouse</name>
    <name type="synonym">Mus dunni</name>
    <dbReference type="NCBI Taxonomy" id="254704"/>
    <lineage>
        <taxon>Eukaryota</taxon>
        <taxon>Metazoa</taxon>
        <taxon>Chordata</taxon>
        <taxon>Craniata</taxon>
        <taxon>Vertebrata</taxon>
        <taxon>Euteleostomi</taxon>
        <taxon>Mammalia</taxon>
        <taxon>Eutheria</taxon>
        <taxon>Euarchontoglires</taxon>
        <taxon>Glires</taxon>
        <taxon>Rodentia</taxon>
        <taxon>Myomorpha</taxon>
        <taxon>Muroidea</taxon>
        <taxon>Muridae</taxon>
        <taxon>Murinae</taxon>
        <taxon>Mus</taxon>
        <taxon>Mus</taxon>
    </lineage>
</organism>
<sequence length="696" mass="81804">MKFAEHLSAHITPEWRKQYIQYEAFKDMLYSAQDQAPSVEVTDEDTVKRYFAKFEEKFFQTCEKELAKINTFYSEKLAEAQRRFATLQNELQSSLDVQKESSGVTTLRQRRKPVFHLSHEERVQHRNIKDLKLAFSEFYLSLILLQNYQNLNFTGFRKILKKHDKILETSRGADWRVIHVEVAPFYTCKKINQLISETEAVVTNELEDGDRQKAMKRLRVPPLGAAQPAPAWTTFRVGLFCGIFIVLNITLVFAAVFKLETDRTVWPLIRIYRGGFLLIEFLFLLGINTYGWRQAGVNHVLIFELNPRNNLSHQHLFEIAGFLGILWCLSLLACFFAPISVIPIYVYPLALYGLMVFFLINPTKTFYYKSRFWLLKLLFRVFTAPFHKVGFADFWLADQLNSLSVILMDLEYMICFYSFELKWDESKGLLPNDPQEPEFCHKYSYGVRAIVQCIPAWLRFIQCLRRYRDTRRAFPHLVNAGKYSTTFFTVTFAALYSTHKEQNHSDTVVFFYLWVFFCIISSCYTLIWDLKMDWGLFDKNAGENTFLREEIVYPQKAYYYCAIIEDVILRFAWTIQISITATTFKPHVGDIIATVFAPLEVFRRFVWNFFRLENEHLNNCGEFRAVRDISVAPLNADDQTLLEQMMDQEDGVRNRQKNRSWKYNQSISLRRPRLASQSKARDTKVLIEDTDDEANT</sequence>
<comment type="function">
    <text evidence="1">Inorganic ion transporter that mediates phosphate ion export across plasma membrane (By similarity). Plays a major role in phosphate homeostasis, preventing intracellular phosphate accumulation and possible calcium phosphate precipitation, ultimately preserving calcium signaling (By similarity). Binds inositol hexakisphosphate (Ins6P) and similar inositol polyphosphates, such as 5-diphospho-inositol pentakisphosphate (5-InsP7), which are important intracellular signaling molecules involved in regulation of phosphate flux (By similarity).</text>
</comment>
<comment type="function">
    <text evidence="4">(Microbial infection) Receptor for xenotropic and polytropic murine leukemia (X- and P-MLV) retroviruses.</text>
</comment>
<comment type="catalytic activity">
    <reaction evidence="1">
        <text>phosphate(in) = phosphate(out)</text>
        <dbReference type="Rhea" id="RHEA:32823"/>
        <dbReference type="ChEBI" id="CHEBI:43474"/>
    </reaction>
    <physiologicalReaction direction="left-to-right" evidence="1">
        <dbReference type="Rhea" id="RHEA:32824"/>
    </physiologicalReaction>
</comment>
<comment type="subunit">
    <text evidence="1">Homodimer.</text>
</comment>
<comment type="subcellular location">
    <subcellularLocation>
        <location evidence="1">Cell membrane</location>
        <topology evidence="1">Multi-pass membrane protein</topology>
    </subcellularLocation>
</comment>
<comment type="domain">
    <text evidence="1">The SPX domain plays a role in the regulation of phosphate flux (By similarity). Inositol hexakisphosphate (Ins6P) is bound between two SPX domains of the homodimer (By similarity). The SPX domain has high affinity for inositol polyphosphates and its affinity for inorganic phosphate is two to three orders of magnitude lower (By similarity).</text>
</comment>
<comment type="similarity">
    <text evidence="5">Belongs to the SYG1 (TC 2.A.94) family.</text>
</comment>
<name>S53A1_MUSTR</name>
<evidence type="ECO:0000250" key="1">
    <source>
        <dbReference type="UniProtKB" id="Q9UBH6"/>
    </source>
</evidence>
<evidence type="ECO:0000255" key="2">
    <source>
        <dbReference type="PROSITE-ProRule" id="PRU00712"/>
    </source>
</evidence>
<evidence type="ECO:0000256" key="3">
    <source>
        <dbReference type="SAM" id="MobiDB-lite"/>
    </source>
</evidence>
<evidence type="ECO:0000269" key="4">
    <source>
    </source>
</evidence>
<evidence type="ECO:0000305" key="5"/>
<keyword id="KW-1003">Cell membrane</keyword>
<keyword id="KW-1183">Host cell receptor for virus entry</keyword>
<keyword id="KW-0472">Membrane</keyword>
<keyword id="KW-0597">Phosphoprotein</keyword>
<keyword id="KW-0675">Receptor</keyword>
<keyword id="KW-0812">Transmembrane</keyword>
<keyword id="KW-1133">Transmembrane helix</keyword>
<reference key="1">
    <citation type="journal article" date="1999" name="J. Virol.">
        <title>Polymorphisms of the cell surface receptor control mouse susceptibilities to xenotropic and polytropic leukemia viruses.</title>
        <authorList>
            <person name="Marin M."/>
            <person name="Tailor C.S."/>
            <person name="Nouri A."/>
            <person name="Kozak S.L."/>
            <person name="Kabat D."/>
        </authorList>
    </citation>
    <scope>NUCLEOTIDE SEQUENCE [MRNA]</scope>
    <scope>FUNCTION (MICROBIAL INFECTION)</scope>
    <scope>MUTAGENESIS OF LYS-500 AND THR-582</scope>
</reference>
<reference key="2">
    <citation type="submission" date="1999-10" db="EMBL/GenBank/DDBJ databases">
        <title>Xenotropic and polytropic murine leukemia virus receptors from different species.</title>
        <authorList>
            <person name="Battini J.-L."/>
            <person name="Rasko J.E.J."/>
            <person name="Miller A.D."/>
        </authorList>
    </citation>
    <scope>NUCLEOTIDE SEQUENCE [MRNA]</scope>
</reference>
<protein>
    <recommendedName>
        <fullName evidence="1">Solute carrier family 53 member 1</fullName>
    </recommendedName>
    <alternativeName>
        <fullName evidence="1">Phosphate exporter SLC53A1</fullName>
    </alternativeName>
    <alternativeName>
        <fullName>Xenotropic and polytropic retrovirus receptor 1</fullName>
    </alternativeName>
</protein>
<accession>Q9QZ71</accession>
<accession>Q9R035</accession>
<feature type="chain" id="PRO_0000315855" description="Solute carrier family 53 member 1">
    <location>
        <begin position="1"/>
        <end position="696"/>
    </location>
</feature>
<feature type="topological domain" description="Cytoplasmic" evidence="1">
    <location>
        <begin position="1"/>
        <end position="228"/>
    </location>
</feature>
<feature type="transmembrane region" description="Helical; Name=1" evidence="1">
    <location>
        <begin position="229"/>
        <end position="259"/>
    </location>
</feature>
<feature type="topological domain" description="Extracellular" evidence="1">
    <location>
        <begin position="260"/>
        <end position="264"/>
    </location>
</feature>
<feature type="transmembrane region" description="Helical; Name=2" evidence="1">
    <location>
        <begin position="265"/>
        <end position="296"/>
    </location>
</feature>
<feature type="topological domain" description="Cytoplasmic" evidence="1">
    <location>
        <begin position="297"/>
        <end position="309"/>
    </location>
</feature>
<feature type="transmembrane region" description="Helical; Name=3" evidence="1">
    <location>
        <begin position="310"/>
        <end position="337"/>
    </location>
</feature>
<feature type="topological domain" description="Extracellular" evidence="1">
    <location>
        <begin position="338"/>
        <end position="343"/>
    </location>
</feature>
<feature type="transmembrane region" description="Helical; Name=4" evidence="1">
    <location>
        <begin position="344"/>
        <end position="365"/>
    </location>
</feature>
<feature type="intramembrane region" description="Helical" evidence="1">
    <location>
        <begin position="366"/>
        <end position="383"/>
    </location>
</feature>
<feature type="topological domain" description="Cytoplasmic" evidence="1">
    <location>
        <begin position="384"/>
        <end position="388"/>
    </location>
</feature>
<feature type="transmembrane region" description="Discontinuously helical; Name=5" evidence="1">
    <location>
        <begin position="389"/>
        <end position="422"/>
    </location>
</feature>
<feature type="topological domain" description="Extracellular" evidence="1">
    <location>
        <begin position="423"/>
        <end position="429"/>
    </location>
</feature>
<feature type="transmembrane region" description="Discontinuously helical; Name=6" evidence="1">
    <location>
        <begin position="430"/>
        <end position="471"/>
    </location>
</feature>
<feature type="topological domain" description="Cytoplasmic" evidence="1">
    <location>
        <position position="472"/>
    </location>
</feature>
<feature type="transmembrane region" description="Helical; Name=7" evidence="1">
    <location>
        <begin position="473"/>
        <end position="503"/>
    </location>
</feature>
<feature type="topological domain" description="Extracellular" evidence="1">
    <location>
        <begin position="504"/>
        <end position="506"/>
    </location>
</feature>
<feature type="transmembrane region" description="Helical; Name=8" evidence="1">
    <location>
        <begin position="507"/>
        <end position="534"/>
    </location>
</feature>
<feature type="topological domain" description="Cytoplasmic" evidence="1">
    <location>
        <begin position="535"/>
        <end position="553"/>
    </location>
</feature>
<feature type="transmembrane region" description="Discontinuously helical; Name=9" evidence="1">
    <location>
        <begin position="554"/>
        <end position="585"/>
    </location>
</feature>
<feature type="topological domain" description="Extracellular" evidence="1">
    <location>
        <begin position="586"/>
        <end position="587"/>
    </location>
</feature>
<feature type="transmembrane region" description="Helical; Name=10" evidence="1">
    <location>
        <begin position="588"/>
        <end position="626"/>
    </location>
</feature>
<feature type="topological domain" description="Cytoplasmic" evidence="1">
    <location>
        <begin position="627"/>
        <end position="696"/>
    </location>
</feature>
<feature type="domain" description="SPX" evidence="1">
    <location>
        <begin position="2"/>
        <end position="224"/>
    </location>
</feature>
<feature type="domain" description="EXS" evidence="2">
    <location>
        <begin position="439"/>
        <end position="643"/>
    </location>
</feature>
<feature type="region of interest" description="Important for inositol polyphosphate binding" evidence="1">
    <location>
        <begin position="158"/>
        <end position="165"/>
    </location>
</feature>
<feature type="region of interest" description="Disordered" evidence="3">
    <location>
        <begin position="672"/>
        <end position="696"/>
    </location>
</feature>
<feature type="binding site" evidence="1">
    <location>
        <position position="398"/>
    </location>
    <ligand>
        <name>phosphate</name>
        <dbReference type="ChEBI" id="CHEBI:43474"/>
    </ligand>
</feature>
<feature type="binding site" evidence="1">
    <location>
        <position position="401"/>
    </location>
    <ligand>
        <name>phosphate</name>
        <dbReference type="ChEBI" id="CHEBI:43474"/>
    </ligand>
</feature>
<feature type="binding site" evidence="1">
    <location>
        <position position="482"/>
    </location>
    <ligand>
        <name>phosphate</name>
        <dbReference type="ChEBI" id="CHEBI:43474"/>
    </ligand>
</feature>
<feature type="binding site" evidence="1">
    <location>
        <position position="483"/>
    </location>
    <ligand>
        <name>phosphate</name>
        <dbReference type="ChEBI" id="CHEBI:43474"/>
    </ligand>
</feature>
<feature type="binding site" evidence="1">
    <location>
        <position position="570"/>
    </location>
    <ligand>
        <name>phosphate</name>
        <dbReference type="ChEBI" id="CHEBI:43474"/>
    </ligand>
</feature>
<feature type="binding site" evidence="1">
    <location>
        <position position="603"/>
    </location>
    <ligand>
        <name>phosphate</name>
        <dbReference type="ChEBI" id="CHEBI:43474"/>
    </ligand>
</feature>
<feature type="binding site" evidence="1">
    <location>
        <position position="604"/>
    </location>
    <ligand>
        <name>phosphate</name>
        <dbReference type="ChEBI" id="CHEBI:43474"/>
    </ligand>
</feature>
<feature type="site" description="Gating residue for phosphate transport" evidence="1">
    <location>
        <position position="573"/>
    </location>
</feature>
<feature type="modified residue" description="Phosphoserine" evidence="1">
    <location>
        <position position="668"/>
    </location>
</feature>
<feature type="modified residue" description="Phosphothreonine" evidence="1">
    <location>
        <position position="690"/>
    </location>
</feature>
<feature type="mutagenesis site" description="Inactive in mediating infection by xenotropic murine leukemia retroviruses; when associated with deletion of T-582." evidence="4">
    <original>K</original>
    <variation>E</variation>
    <location>
        <position position="500"/>
    </location>
</feature>
<feature type="mutagenesis site" description="No effect. Inactive in mediating infection by xenotropic murine leukemia retroviruses; when associated with E-500." evidence="4">
    <location>
        <position position="582"/>
    </location>
</feature>
<feature type="sequence conflict" description="In Ref. 1; AAF03483." evidence="5" ref="1">
    <original>D</original>
    <variation>V</variation>
    <location>
        <position position="210"/>
    </location>
</feature>
<feature type="sequence conflict" description="In Ref. 1; AAF03483." evidence="5" ref="1">
    <original>V</original>
    <variation>I</variation>
    <location>
        <position position="341"/>
    </location>
</feature>
<dbReference type="EMBL" id="AF131097">
    <property type="protein sequence ID" value="AAF03483.1"/>
    <property type="molecule type" value="mRNA"/>
</dbReference>
<dbReference type="EMBL" id="AF198105">
    <property type="protein sequence ID" value="AAF13257.1"/>
    <property type="molecule type" value="mRNA"/>
</dbReference>
<dbReference type="SMR" id="Q9QZ71"/>
<dbReference type="MGI" id="MGI:97932">
    <property type="gene designation" value="Xpr1"/>
</dbReference>
<dbReference type="GO" id="GO:0005794">
    <property type="term" value="C:Golgi apparatus"/>
    <property type="evidence" value="ECO:0007669"/>
    <property type="project" value="TreeGrafter"/>
</dbReference>
<dbReference type="GO" id="GO:0005886">
    <property type="term" value="C:plasma membrane"/>
    <property type="evidence" value="ECO:0000250"/>
    <property type="project" value="UniProtKB"/>
</dbReference>
<dbReference type="GO" id="GO:0015562">
    <property type="term" value="F:efflux transmembrane transporter activity"/>
    <property type="evidence" value="ECO:0000250"/>
    <property type="project" value="UniProtKB"/>
</dbReference>
<dbReference type="GO" id="GO:0000822">
    <property type="term" value="F:inositol hexakisphosphate binding"/>
    <property type="evidence" value="ECO:0000250"/>
    <property type="project" value="UniProtKB"/>
</dbReference>
<dbReference type="GO" id="GO:0005315">
    <property type="term" value="F:phosphate transmembrane transporter activity"/>
    <property type="evidence" value="ECO:0000250"/>
    <property type="project" value="UniProtKB"/>
</dbReference>
<dbReference type="GO" id="GO:0001618">
    <property type="term" value="F:virus receptor activity"/>
    <property type="evidence" value="ECO:0007669"/>
    <property type="project" value="UniProtKB-KW"/>
</dbReference>
<dbReference type="GO" id="GO:0016036">
    <property type="term" value="P:cellular response to phosphate starvation"/>
    <property type="evidence" value="ECO:0007669"/>
    <property type="project" value="TreeGrafter"/>
</dbReference>
<dbReference type="GO" id="GO:0030643">
    <property type="term" value="P:intracellular phosphate ion homeostasis"/>
    <property type="evidence" value="ECO:0000250"/>
    <property type="project" value="UniProtKB"/>
</dbReference>
<dbReference type="GO" id="GO:0035435">
    <property type="term" value="P:phosphate ion transmembrane transport"/>
    <property type="evidence" value="ECO:0000250"/>
    <property type="project" value="UniProtKB"/>
</dbReference>
<dbReference type="CDD" id="cd14477">
    <property type="entry name" value="SPX_XPR1_like"/>
    <property type="match status" value="1"/>
</dbReference>
<dbReference type="InterPro" id="IPR004342">
    <property type="entry name" value="EXS_C"/>
</dbReference>
<dbReference type="InterPro" id="IPR004331">
    <property type="entry name" value="SPX_dom"/>
</dbReference>
<dbReference type="PANTHER" id="PTHR10783:SF103">
    <property type="entry name" value="SOLUTE CARRIER FAMILY 53 MEMBER 1"/>
    <property type="match status" value="1"/>
</dbReference>
<dbReference type="PANTHER" id="PTHR10783">
    <property type="entry name" value="XENOTROPIC AND POLYTROPIC RETROVIRUS RECEPTOR 1-RELATED"/>
    <property type="match status" value="1"/>
</dbReference>
<dbReference type="Pfam" id="PF03124">
    <property type="entry name" value="EXS"/>
    <property type="match status" value="1"/>
</dbReference>
<dbReference type="Pfam" id="PF03105">
    <property type="entry name" value="SPX"/>
    <property type="match status" value="3"/>
</dbReference>
<dbReference type="PROSITE" id="PS51380">
    <property type="entry name" value="EXS"/>
    <property type="match status" value="1"/>
</dbReference>
<dbReference type="PROSITE" id="PS51382">
    <property type="entry name" value="SPX"/>
    <property type="match status" value="1"/>
</dbReference>